<organism>
    <name type="scientific">Escherichia coli</name>
    <dbReference type="NCBI Taxonomy" id="562"/>
    <lineage>
        <taxon>Bacteria</taxon>
        <taxon>Pseudomonadati</taxon>
        <taxon>Pseudomonadota</taxon>
        <taxon>Gammaproteobacteria</taxon>
        <taxon>Enterobacterales</taxon>
        <taxon>Enterobacteriaceae</taxon>
        <taxon>Escherichia</taxon>
    </lineage>
</organism>
<name>REPL2_ECOLX</name>
<feature type="peptide" id="PRO_0000068343" description="Positive regulator of RepFIC repA1 expression">
    <location>
        <begin position="1"/>
        <end position="24"/>
    </location>
</feature>
<accession>P62550</accession>
<accession>Q9WTA7</accession>
<sequence>MPGKVQDFFLCSLLLRIVSAGWCD</sequence>
<keyword id="KW-0235">DNA replication</keyword>
<keyword id="KW-0428">Leader peptide</keyword>
<keyword id="KW-0614">Plasmid</keyword>
<protein>
    <recommendedName>
        <fullName>Positive regulator of RepFIC repA1 expression</fullName>
    </recommendedName>
    <alternativeName>
        <fullName>repA1 leader peptide</fullName>
    </alternativeName>
</protein>
<gene>
    <name type="primary">repL</name>
    <name type="synonym">repA6</name>
    <name type="synonym">tapA</name>
</gene>
<dbReference type="EMBL" id="AP000342">
    <property type="protein sequence ID" value="BAA78893.1"/>
    <property type="molecule type" value="Genomic_DNA"/>
</dbReference>
<dbReference type="RefSeq" id="NP_862958.1">
    <property type="nucleotide sequence ID" value="NC_004998.1"/>
</dbReference>
<dbReference type="RefSeq" id="NP_957642.1">
    <property type="nucleotide sequence ID" value="NC_005327.1"/>
</dbReference>
<dbReference type="RefSeq" id="YP_001096510.1">
    <property type="nucleotide sequence ID" value="NC_009133.1"/>
</dbReference>
<dbReference type="RefSeq" id="YP_001816557.1">
    <property type="nucleotide sequence ID" value="NC_010558.1"/>
</dbReference>
<dbReference type="RefSeq" id="YP_006954222.1">
    <property type="nucleotide sequence ID" value="NC_019095.1"/>
</dbReference>
<dbReference type="RefSeq" id="YP_788102.1">
    <property type="nucleotide sequence ID" value="NC_008460.1"/>
</dbReference>
<dbReference type="GO" id="GO:0006260">
    <property type="term" value="P:DNA replication"/>
    <property type="evidence" value="ECO:0007669"/>
    <property type="project" value="UniProtKB-KW"/>
</dbReference>
<dbReference type="InterPro" id="IPR012605">
    <property type="entry name" value="RepA1_leader_peptide_Tap"/>
</dbReference>
<dbReference type="NCBIfam" id="TIGR03475">
    <property type="entry name" value="tap_IncFII_lead"/>
    <property type="match status" value="1"/>
</dbReference>
<dbReference type="Pfam" id="PF08048">
    <property type="entry name" value="RepA1_leader"/>
    <property type="match status" value="1"/>
</dbReference>
<proteinExistence type="predicted"/>
<reference key="1">
    <citation type="submission" date="1999-05" db="EMBL/GenBank/DDBJ databases">
        <title>Organization and diversification of plasmid genomes: complete nucleotide sequence of the R100 genome.</title>
        <authorList>
            <person name="Sampei G."/>
            <person name="Mizobuchi K."/>
        </authorList>
    </citation>
    <scope>NUCLEOTIDE SEQUENCE [GENOMIC DNA]</scope>
</reference>
<geneLocation type="plasmid">
    <name>IncFII R100</name>
    <name>NR1</name>
</geneLocation>